<comment type="function">
    <text evidence="1">Catalyzes two activities which are involved in the cyclic version of arginine biosynthesis: the synthesis of N-acetylglutamate from glutamate and acetyl-CoA as the acetyl donor, and of ornithine by transacetylation between N(2)-acetylornithine and glutamate.</text>
</comment>
<comment type="catalytic activity">
    <reaction evidence="1">
        <text>N(2)-acetyl-L-ornithine + L-glutamate = N-acetyl-L-glutamate + L-ornithine</text>
        <dbReference type="Rhea" id="RHEA:15349"/>
        <dbReference type="ChEBI" id="CHEBI:29985"/>
        <dbReference type="ChEBI" id="CHEBI:44337"/>
        <dbReference type="ChEBI" id="CHEBI:46911"/>
        <dbReference type="ChEBI" id="CHEBI:57805"/>
        <dbReference type="EC" id="2.3.1.35"/>
    </reaction>
</comment>
<comment type="catalytic activity">
    <reaction evidence="1">
        <text>L-glutamate + acetyl-CoA = N-acetyl-L-glutamate + CoA + H(+)</text>
        <dbReference type="Rhea" id="RHEA:24292"/>
        <dbReference type="ChEBI" id="CHEBI:15378"/>
        <dbReference type="ChEBI" id="CHEBI:29985"/>
        <dbReference type="ChEBI" id="CHEBI:44337"/>
        <dbReference type="ChEBI" id="CHEBI:57287"/>
        <dbReference type="ChEBI" id="CHEBI:57288"/>
        <dbReference type="EC" id="2.3.1.1"/>
    </reaction>
</comment>
<comment type="pathway">
    <text evidence="1">Amino-acid biosynthesis; L-arginine biosynthesis; L-ornithine and N-acetyl-L-glutamate from L-glutamate and N(2)-acetyl-L-ornithine (cyclic): step 1/1.</text>
</comment>
<comment type="pathway">
    <text evidence="1">Amino-acid biosynthesis; L-arginine biosynthesis; N(2)-acetyl-L-ornithine from L-glutamate: step 1/4.</text>
</comment>
<comment type="subunit">
    <text evidence="1">Heterotetramer of two alpha and two beta chains.</text>
</comment>
<comment type="subcellular location">
    <subcellularLocation>
        <location evidence="1">Cytoplasm</location>
    </subcellularLocation>
</comment>
<comment type="similarity">
    <text evidence="1">Belongs to the ArgJ family.</text>
</comment>
<proteinExistence type="inferred from homology"/>
<feature type="chain" id="PRO_0000227220" description="Arginine biosynthesis bifunctional protein ArgJ alpha chain" evidence="1">
    <location>
        <begin position="1"/>
        <end position="199"/>
    </location>
</feature>
<feature type="chain" id="PRO_0000227221" description="Arginine biosynthesis bifunctional protein ArgJ beta chain" evidence="1">
    <location>
        <begin position="200"/>
        <end position="405"/>
    </location>
</feature>
<feature type="region of interest" description="Disordered" evidence="2">
    <location>
        <begin position="1"/>
        <end position="21"/>
    </location>
</feature>
<feature type="compositionally biased region" description="Polar residues" evidence="2">
    <location>
        <begin position="1"/>
        <end position="18"/>
    </location>
</feature>
<feature type="active site" description="Nucleophile" evidence="1">
    <location>
        <position position="200"/>
    </location>
</feature>
<feature type="binding site" evidence="1">
    <location>
        <position position="167"/>
    </location>
    <ligand>
        <name>substrate</name>
    </ligand>
</feature>
<feature type="binding site" evidence="1">
    <location>
        <position position="189"/>
    </location>
    <ligand>
        <name>substrate</name>
    </ligand>
</feature>
<feature type="binding site" evidence="1">
    <location>
        <position position="200"/>
    </location>
    <ligand>
        <name>substrate</name>
    </ligand>
</feature>
<feature type="binding site" evidence="1">
    <location>
        <position position="281"/>
    </location>
    <ligand>
        <name>substrate</name>
    </ligand>
</feature>
<feature type="binding site" evidence="1">
    <location>
        <position position="400"/>
    </location>
    <ligand>
        <name>substrate</name>
    </ligand>
</feature>
<feature type="binding site" evidence="1">
    <location>
        <position position="405"/>
    </location>
    <ligand>
        <name>substrate</name>
    </ligand>
</feature>
<feature type="site" description="Involved in the stabilization of negative charge on the oxyanion by the formation of the oxyanion hole" evidence="1">
    <location>
        <position position="128"/>
    </location>
</feature>
<feature type="site" description="Involved in the stabilization of negative charge on the oxyanion by the formation of the oxyanion hole" evidence="1">
    <location>
        <position position="129"/>
    </location>
</feature>
<feature type="site" description="Cleavage; by autolysis" evidence="1">
    <location>
        <begin position="199"/>
        <end position="200"/>
    </location>
</feature>
<accession>Q4JW03</accession>
<reference key="1">
    <citation type="journal article" date="2005" name="J. Bacteriol.">
        <title>Complete genome sequence and analysis of the multiresistant nosocomial pathogen Corynebacterium jeikeium K411, a lipid-requiring bacterium of the human skin flora.</title>
        <authorList>
            <person name="Tauch A."/>
            <person name="Kaiser O."/>
            <person name="Hain T."/>
            <person name="Goesmann A."/>
            <person name="Weisshaar B."/>
            <person name="Albersmeier A."/>
            <person name="Bekel T."/>
            <person name="Bischoff N."/>
            <person name="Brune I."/>
            <person name="Chakraborty T."/>
            <person name="Kalinowski J."/>
            <person name="Meyer F."/>
            <person name="Rupp O."/>
            <person name="Schneiker S."/>
            <person name="Viehoever P."/>
            <person name="Puehler A."/>
        </authorList>
    </citation>
    <scope>NUCLEOTIDE SEQUENCE [LARGE SCALE GENOMIC DNA]</scope>
    <source>
        <strain>K411</strain>
    </source>
</reference>
<sequence>MTSADKNNPDTSTAQGSSADLGVTVPKGFSAAAVTAGIKPSGKSDMALIRNDGPDDIAAAMFTRNQVTAAPVRYTKANNDGTFRAVVVNSGNANACNGAQGDKDARATAEKAAELLGCQPGDVAVCSTGLIGDVLPMDKVLSGVDELAGKLDQSITAGNDAARAIMTTDLVAKEAVYHGDGWSIGAMGKGVGMMAPSLATMLVFITTDAHLPSADMAHEALAGATPTTFDCIDIDGATSTNDTVLLMASGASGITPDAEEFNAAIHQVCLDIAMQLQADAEGVTKRVSITVGGAETDADAQTAARVIGRDNLFKCAMFGSDPNWGRVLAAVGMAPVKMNPEAISVSFNGHPVCINSTGAPGARTVDLSGADIAVEVDLGVGEGRATVWTTDLSYSYVEINSEYST</sequence>
<evidence type="ECO:0000255" key="1">
    <source>
        <dbReference type="HAMAP-Rule" id="MF_01106"/>
    </source>
</evidence>
<evidence type="ECO:0000256" key="2">
    <source>
        <dbReference type="SAM" id="MobiDB-lite"/>
    </source>
</evidence>
<dbReference type="EC" id="2.3.1.35" evidence="1"/>
<dbReference type="EC" id="2.3.1.1" evidence="1"/>
<dbReference type="EMBL" id="CR931997">
    <property type="protein sequence ID" value="CAI37004.1"/>
    <property type="molecule type" value="Genomic_DNA"/>
</dbReference>
<dbReference type="RefSeq" id="WP_011273443.1">
    <property type="nucleotide sequence ID" value="NC_007164.1"/>
</dbReference>
<dbReference type="SMR" id="Q4JW03"/>
<dbReference type="STRING" id="306537.jk0842"/>
<dbReference type="KEGG" id="cjk:jk0842"/>
<dbReference type="PATRIC" id="fig|306537.10.peg.853"/>
<dbReference type="eggNOG" id="COG1364">
    <property type="taxonomic scope" value="Bacteria"/>
</dbReference>
<dbReference type="HOGENOM" id="CLU_027172_2_0_11"/>
<dbReference type="OrthoDB" id="9804242at2"/>
<dbReference type="UniPathway" id="UPA00068">
    <property type="reaction ID" value="UER00106"/>
</dbReference>
<dbReference type="UniPathway" id="UPA00068">
    <property type="reaction ID" value="UER00111"/>
</dbReference>
<dbReference type="Proteomes" id="UP000000545">
    <property type="component" value="Chromosome"/>
</dbReference>
<dbReference type="GO" id="GO:0005737">
    <property type="term" value="C:cytoplasm"/>
    <property type="evidence" value="ECO:0007669"/>
    <property type="project" value="UniProtKB-SubCell"/>
</dbReference>
<dbReference type="GO" id="GO:0004358">
    <property type="term" value="F:glutamate N-acetyltransferase activity"/>
    <property type="evidence" value="ECO:0007669"/>
    <property type="project" value="UniProtKB-UniRule"/>
</dbReference>
<dbReference type="GO" id="GO:0004042">
    <property type="term" value="F:L-glutamate N-acetyltransferase activity"/>
    <property type="evidence" value="ECO:0007669"/>
    <property type="project" value="UniProtKB-UniRule"/>
</dbReference>
<dbReference type="GO" id="GO:0006526">
    <property type="term" value="P:L-arginine biosynthetic process"/>
    <property type="evidence" value="ECO:0007669"/>
    <property type="project" value="UniProtKB-UniRule"/>
</dbReference>
<dbReference type="GO" id="GO:0006592">
    <property type="term" value="P:ornithine biosynthetic process"/>
    <property type="evidence" value="ECO:0007669"/>
    <property type="project" value="TreeGrafter"/>
</dbReference>
<dbReference type="CDD" id="cd02152">
    <property type="entry name" value="OAT"/>
    <property type="match status" value="1"/>
</dbReference>
<dbReference type="FunFam" id="3.10.20.340:FF:000005">
    <property type="entry name" value="Arginine biosynthesis bifunctional protein ArgJ"/>
    <property type="match status" value="1"/>
</dbReference>
<dbReference type="Gene3D" id="3.10.20.340">
    <property type="entry name" value="ArgJ beta chain, C-terminal domain"/>
    <property type="match status" value="1"/>
</dbReference>
<dbReference type="Gene3D" id="3.60.70.12">
    <property type="entry name" value="L-amino peptidase D-ALA esterase/amidase"/>
    <property type="match status" value="1"/>
</dbReference>
<dbReference type="HAMAP" id="MF_01106">
    <property type="entry name" value="ArgJ"/>
    <property type="match status" value="1"/>
</dbReference>
<dbReference type="InterPro" id="IPR002813">
    <property type="entry name" value="Arg_biosynth_ArgJ"/>
</dbReference>
<dbReference type="InterPro" id="IPR016117">
    <property type="entry name" value="ArgJ-like_dom_sf"/>
</dbReference>
<dbReference type="InterPro" id="IPR042195">
    <property type="entry name" value="ArgJ_beta_C"/>
</dbReference>
<dbReference type="NCBIfam" id="TIGR00120">
    <property type="entry name" value="ArgJ"/>
    <property type="match status" value="1"/>
</dbReference>
<dbReference type="NCBIfam" id="NF003802">
    <property type="entry name" value="PRK05388.1"/>
    <property type="match status" value="1"/>
</dbReference>
<dbReference type="PANTHER" id="PTHR23100">
    <property type="entry name" value="ARGININE BIOSYNTHESIS BIFUNCTIONAL PROTEIN ARGJ"/>
    <property type="match status" value="1"/>
</dbReference>
<dbReference type="PANTHER" id="PTHR23100:SF0">
    <property type="entry name" value="ARGININE BIOSYNTHESIS BIFUNCTIONAL PROTEIN ARGJ, MITOCHONDRIAL"/>
    <property type="match status" value="1"/>
</dbReference>
<dbReference type="Pfam" id="PF01960">
    <property type="entry name" value="ArgJ"/>
    <property type="match status" value="1"/>
</dbReference>
<dbReference type="SUPFAM" id="SSF56266">
    <property type="entry name" value="DmpA/ArgJ-like"/>
    <property type="match status" value="1"/>
</dbReference>
<keyword id="KW-0012">Acyltransferase</keyword>
<keyword id="KW-0028">Amino-acid biosynthesis</keyword>
<keyword id="KW-0055">Arginine biosynthesis</keyword>
<keyword id="KW-0068">Autocatalytic cleavage</keyword>
<keyword id="KW-0963">Cytoplasm</keyword>
<keyword id="KW-0511">Multifunctional enzyme</keyword>
<keyword id="KW-1185">Reference proteome</keyword>
<keyword id="KW-0808">Transferase</keyword>
<name>ARGJ_CORJK</name>
<gene>
    <name evidence="1" type="primary">argJ</name>
    <name type="ordered locus">jk0842</name>
</gene>
<protein>
    <recommendedName>
        <fullName evidence="1">Arginine biosynthesis bifunctional protein ArgJ</fullName>
    </recommendedName>
    <domain>
        <recommendedName>
            <fullName evidence="1">Glutamate N-acetyltransferase</fullName>
            <ecNumber evidence="1">2.3.1.35</ecNumber>
        </recommendedName>
        <alternativeName>
            <fullName evidence="1">Ornithine acetyltransferase</fullName>
            <shortName evidence="1">OATase</shortName>
        </alternativeName>
        <alternativeName>
            <fullName evidence="1">Ornithine transacetylase</fullName>
        </alternativeName>
    </domain>
    <domain>
        <recommendedName>
            <fullName evidence="1">Amino-acid acetyltransferase</fullName>
            <ecNumber evidence="1">2.3.1.1</ecNumber>
        </recommendedName>
        <alternativeName>
            <fullName evidence="1">N-acetylglutamate synthase</fullName>
            <shortName evidence="1">AGSase</shortName>
        </alternativeName>
    </domain>
    <component>
        <recommendedName>
            <fullName evidence="1">Arginine biosynthesis bifunctional protein ArgJ alpha chain</fullName>
        </recommendedName>
    </component>
    <component>
        <recommendedName>
            <fullName evidence="1">Arginine biosynthesis bifunctional protein ArgJ beta chain</fullName>
        </recommendedName>
    </component>
</protein>
<organism>
    <name type="scientific">Corynebacterium jeikeium (strain K411)</name>
    <dbReference type="NCBI Taxonomy" id="306537"/>
    <lineage>
        <taxon>Bacteria</taxon>
        <taxon>Bacillati</taxon>
        <taxon>Actinomycetota</taxon>
        <taxon>Actinomycetes</taxon>
        <taxon>Mycobacteriales</taxon>
        <taxon>Corynebacteriaceae</taxon>
        <taxon>Corynebacterium</taxon>
    </lineage>
</organism>